<sequence>MMNEHSIDTDNRKANNALYLFIIIGLIPLLCIFVVYYKTPDALLLRKIATSTENLPSITSSYNPLMTKVMDIYCKTAPFLALILYILTFKIRKLINNTDRNTVLRSCLLSPLVYAAIVYLFCFRNFELTTAGRPVRLMATNDATLLLFYIGLYSIIFFTTYITLFTPVTAFKLLKKRQ</sequence>
<organism>
    <name type="scientific">Citrobacter freundii</name>
    <dbReference type="NCBI Taxonomy" id="546"/>
    <lineage>
        <taxon>Bacteria</taxon>
        <taxon>Pseudomonadati</taxon>
        <taxon>Pseudomonadota</taxon>
        <taxon>Gammaproteobacteria</taxon>
        <taxon>Enterobacterales</taxon>
        <taxon>Enterobacteriaceae</taxon>
        <taxon>Citrobacter</taxon>
        <taxon>Citrobacter freundii complex</taxon>
    </lineage>
</organism>
<dbReference type="EMBL" id="X00964">
    <property type="protein sequence ID" value="CAA25476.1"/>
    <property type="molecule type" value="Genomic_DNA"/>
</dbReference>
<dbReference type="EMBL" id="M37402">
    <property type="protein sequence ID" value="AAA72880.1"/>
    <property type="molecule type" value="Genomic_DNA"/>
</dbReference>
<dbReference type="PIR" id="S07230">
    <property type="entry name" value="IMEBAC"/>
</dbReference>
<dbReference type="RefSeq" id="WP_008323617.1">
    <property type="nucleotide sequence ID" value="NZ_MDCX01000274.1"/>
</dbReference>
<dbReference type="RefSeq" id="YP_004933728.1">
    <property type="nucleotide sequence ID" value="NC_016151.1"/>
</dbReference>
<dbReference type="GO" id="GO:0005886">
    <property type="term" value="C:plasma membrane"/>
    <property type="evidence" value="ECO:0007669"/>
    <property type="project" value="UniProtKB-SubCell"/>
</dbReference>
<dbReference type="GO" id="GO:0015643">
    <property type="term" value="F:toxic substance binding"/>
    <property type="evidence" value="ECO:0007669"/>
    <property type="project" value="InterPro"/>
</dbReference>
<dbReference type="GO" id="GO:0030153">
    <property type="term" value="P:bacteriocin immunity"/>
    <property type="evidence" value="ECO:0007669"/>
    <property type="project" value="UniProtKB-KW"/>
</dbReference>
<dbReference type="InterPro" id="IPR005557">
    <property type="entry name" value="Colicin_im"/>
</dbReference>
<dbReference type="Pfam" id="PF03857">
    <property type="entry name" value="Colicin_im"/>
    <property type="match status" value="1"/>
</dbReference>
<dbReference type="PIRSF" id="PIRSF003003">
    <property type="entry name" value="Colicin_im"/>
    <property type="match status" value="1"/>
</dbReference>
<protein>
    <recommendedName>
        <fullName>Colicin-A immunity protein</fullName>
    </recommendedName>
    <alternativeName>
        <fullName>Microcin-A immunity protein</fullName>
    </alternativeName>
</protein>
<comment type="function">
    <text evidence="1">This protein is able to protect a cell, which harbors the plasmid ColA encoding colicin A, against colicin A.</text>
</comment>
<comment type="subcellular location">
    <subcellularLocation>
        <location>Cell inner membrane</location>
        <topology>Multi-pass membrane protein</topology>
    </subcellularLocation>
</comment>
<feature type="chain" id="PRO_0000218690" description="Colicin-A immunity protein">
    <location>
        <begin position="1"/>
        <end position="178"/>
    </location>
</feature>
<feature type="topological domain" description="Cytoplasmic" evidence="3">
    <location>
        <begin position="1"/>
        <end position="13"/>
    </location>
</feature>
<feature type="transmembrane region" description="Helical" evidence="2">
    <location>
        <begin position="14"/>
        <end position="37"/>
    </location>
</feature>
<feature type="topological domain" description="Periplasmic" evidence="3">
    <location>
        <begin position="38"/>
        <end position="68"/>
    </location>
</feature>
<feature type="transmembrane region" description="Helical" evidence="2">
    <location>
        <begin position="69"/>
        <end position="89"/>
    </location>
</feature>
<feature type="topological domain" description="Cytoplasmic" evidence="3">
    <location>
        <begin position="90"/>
        <end position="105"/>
    </location>
</feature>
<feature type="transmembrane region" description="Helical" evidence="2">
    <location>
        <begin position="106"/>
        <end position="123"/>
    </location>
</feature>
<feature type="topological domain" description="Periplasmic" evidence="3">
    <location>
        <begin position="124"/>
        <end position="142"/>
    </location>
</feature>
<feature type="transmembrane region" description="Helical" evidence="2">
    <location>
        <begin position="143"/>
        <end position="165"/>
    </location>
</feature>
<feature type="topological domain" description="Cytoplasmic" evidence="3">
    <location>
        <begin position="166"/>
        <end position="178"/>
    </location>
</feature>
<evidence type="ECO:0000269" key="1">
    <source>
    </source>
</evidence>
<evidence type="ECO:0000305" key="2"/>
<evidence type="ECO:0000305" key="3">
    <source>
    </source>
</evidence>
<reference key="1">
    <citation type="journal article" date="1984" name="Eur. J. Biochem.">
        <title>Nucleotide sequence of the gene for the immunity protein to colicin A. Analysis of codon usage of immunity proteins as compared to colicins.</title>
        <authorList>
            <person name="Lloubes R.P."/>
            <person name="Chartier M.J."/>
            <person name="Journet A.M."/>
            <person name="Varenne S.G."/>
            <person name="Lazdunski C.J."/>
        </authorList>
    </citation>
    <scope>NUCLEOTIDE SEQUENCE [GENOMIC DNA]</scope>
</reference>
<reference key="2">
    <citation type="journal article" date="1988" name="Mol. Gen. Genet.">
        <title>The complete nucleotide sequence of the colicinogenic plasmid ColA. High extent of homology with ColE1.</title>
        <authorList>
            <person name="Morlon J."/>
            <person name="Chartier M."/>
            <person name="Bidaud M."/>
            <person name="Lazdunski C."/>
        </authorList>
    </citation>
    <scope>NUCLEOTIDE SEQUENCE [GENOMIC DNA]</scope>
</reference>
<reference key="3">
    <citation type="journal article" date="1989" name="Mol. Microbiol.">
        <title>Topology and function of the integral membrane protein conferring immunity to colicin A.</title>
        <authorList>
            <person name="Geli V."/>
            <person name="Baty D."/>
            <person name="Pattus F."/>
            <person name="Lazdunski C."/>
        </authorList>
    </citation>
    <scope>TOPOLOGY</scope>
    <scope>FUNCTION</scope>
</reference>
<proteinExistence type="evidence at protein level"/>
<geneLocation type="plasmid">
    <name>ColA-CA31</name>
</geneLocation>
<keyword id="KW-0079">Bacteriocin immunity</keyword>
<keyword id="KW-0997">Cell inner membrane</keyword>
<keyword id="KW-1003">Cell membrane</keyword>
<keyword id="KW-0472">Membrane</keyword>
<keyword id="KW-0614">Plasmid</keyword>
<keyword id="KW-0812">Transmembrane</keyword>
<keyword id="KW-1133">Transmembrane helix</keyword>
<accession>P05701</accession>
<gene>
    <name type="primary">cai</name>
</gene>
<name>IMMA_CITFR</name>